<gene>
    <name evidence="2" type="primary">tuf</name>
    <name type="ordered locus">PSPTO_0624</name>
</gene>
<evidence type="ECO:0000250" key="1"/>
<evidence type="ECO:0000255" key="2">
    <source>
        <dbReference type="HAMAP-Rule" id="MF_00118"/>
    </source>
</evidence>
<name>EFTU_PSESM</name>
<feature type="chain" id="PRO_0000091368" description="Elongation factor Tu">
    <location>
        <begin position="1"/>
        <end position="397"/>
    </location>
</feature>
<feature type="domain" description="tr-type G">
    <location>
        <begin position="10"/>
        <end position="207"/>
    </location>
</feature>
<feature type="region of interest" description="G1" evidence="1">
    <location>
        <begin position="19"/>
        <end position="26"/>
    </location>
</feature>
<feature type="region of interest" description="G2" evidence="1">
    <location>
        <begin position="60"/>
        <end position="64"/>
    </location>
</feature>
<feature type="region of interest" description="G3" evidence="1">
    <location>
        <begin position="81"/>
        <end position="84"/>
    </location>
</feature>
<feature type="region of interest" description="G4" evidence="1">
    <location>
        <begin position="136"/>
        <end position="139"/>
    </location>
</feature>
<feature type="region of interest" description="G5" evidence="1">
    <location>
        <begin position="174"/>
        <end position="176"/>
    </location>
</feature>
<feature type="binding site" evidence="2">
    <location>
        <begin position="19"/>
        <end position="26"/>
    </location>
    <ligand>
        <name>GTP</name>
        <dbReference type="ChEBI" id="CHEBI:37565"/>
    </ligand>
</feature>
<feature type="binding site" evidence="2">
    <location>
        <position position="26"/>
    </location>
    <ligand>
        <name>Mg(2+)</name>
        <dbReference type="ChEBI" id="CHEBI:18420"/>
    </ligand>
</feature>
<feature type="binding site" evidence="2">
    <location>
        <begin position="81"/>
        <end position="85"/>
    </location>
    <ligand>
        <name>GTP</name>
        <dbReference type="ChEBI" id="CHEBI:37565"/>
    </ligand>
</feature>
<feature type="binding site" evidence="2">
    <location>
        <begin position="136"/>
        <end position="139"/>
    </location>
    <ligand>
        <name>GTP</name>
        <dbReference type="ChEBI" id="CHEBI:37565"/>
    </ligand>
</feature>
<sequence length="397" mass="43365">MAKEKFDRSLPHCNVGTIGHVDHGKTTLTAALTRVCSEVFGSARVDFDKIDSAPEEKARGITINTAHVEYNSATRHYAHVDCPGHADYVKNMITGAAQMDGAILVCSAADGPMPQTREHILLSRQVGVPYIVVFLNKADLVDDAELLELVEMEVRDLLSTYDFPGDDTPIIIGSARMALEGKDDNEMGTTAVKKLVETLDSYIPQPERAVDKPFLMPIEDVFSISGRGTVVTGRVERGIVKVQDPLEIVGLRDTTVTTCTGVEMFRKLLDEGRAGENCGVLLRGTKRDDVERGQVLVKPGTVKPHTQFEAEIYVLSKEEGGRHTPFFKGYRPQFYFRTTDVTGSCELPEGVEMVMPGDNVKVSVTLIKPIAMEDGLRFAIREGGRTVGAGVVAKIIA</sequence>
<keyword id="KW-0963">Cytoplasm</keyword>
<keyword id="KW-0251">Elongation factor</keyword>
<keyword id="KW-0342">GTP-binding</keyword>
<keyword id="KW-0378">Hydrolase</keyword>
<keyword id="KW-0460">Magnesium</keyword>
<keyword id="KW-0479">Metal-binding</keyword>
<keyword id="KW-0547">Nucleotide-binding</keyword>
<keyword id="KW-0648">Protein biosynthesis</keyword>
<keyword id="KW-1185">Reference proteome</keyword>
<proteinExistence type="inferred from homology"/>
<comment type="function">
    <text evidence="2">GTP hydrolase that promotes the GTP-dependent binding of aminoacyl-tRNA to the A-site of ribosomes during protein biosynthesis.</text>
</comment>
<comment type="catalytic activity">
    <reaction evidence="2">
        <text>GTP + H2O = GDP + phosphate + H(+)</text>
        <dbReference type="Rhea" id="RHEA:19669"/>
        <dbReference type="ChEBI" id="CHEBI:15377"/>
        <dbReference type="ChEBI" id="CHEBI:15378"/>
        <dbReference type="ChEBI" id="CHEBI:37565"/>
        <dbReference type="ChEBI" id="CHEBI:43474"/>
        <dbReference type="ChEBI" id="CHEBI:58189"/>
        <dbReference type="EC" id="3.6.5.3"/>
    </reaction>
    <physiologicalReaction direction="left-to-right" evidence="2">
        <dbReference type="Rhea" id="RHEA:19670"/>
    </physiologicalReaction>
</comment>
<comment type="subunit">
    <text evidence="2">Monomer.</text>
</comment>
<comment type="subcellular location">
    <subcellularLocation>
        <location evidence="2">Cytoplasm</location>
    </subcellularLocation>
</comment>
<comment type="similarity">
    <text evidence="2">Belongs to the TRAFAC class translation factor GTPase superfamily. Classic translation factor GTPase family. EF-Tu/EF-1A subfamily.</text>
</comment>
<reference key="1">
    <citation type="journal article" date="2003" name="Proc. Natl. Acad. Sci. U.S.A.">
        <title>The complete genome sequence of the Arabidopsis and tomato pathogen Pseudomonas syringae pv. tomato DC3000.</title>
        <authorList>
            <person name="Buell C.R."/>
            <person name="Joardar V."/>
            <person name="Lindeberg M."/>
            <person name="Selengut J."/>
            <person name="Paulsen I.T."/>
            <person name="Gwinn M.L."/>
            <person name="Dodson R.J."/>
            <person name="DeBoy R.T."/>
            <person name="Durkin A.S."/>
            <person name="Kolonay J.F."/>
            <person name="Madupu R."/>
            <person name="Daugherty S.C."/>
            <person name="Brinkac L.M."/>
            <person name="Beanan M.J."/>
            <person name="Haft D.H."/>
            <person name="Nelson W.C."/>
            <person name="Davidsen T.M."/>
            <person name="Zafar N."/>
            <person name="Zhou L."/>
            <person name="Liu J."/>
            <person name="Yuan Q."/>
            <person name="Khouri H.M."/>
            <person name="Fedorova N.B."/>
            <person name="Tran B."/>
            <person name="Russell D."/>
            <person name="Berry K.J."/>
            <person name="Utterback T.R."/>
            <person name="Van Aken S.E."/>
            <person name="Feldblyum T.V."/>
            <person name="D'Ascenzo M."/>
            <person name="Deng W.-L."/>
            <person name="Ramos A.R."/>
            <person name="Alfano J.R."/>
            <person name="Cartinhour S."/>
            <person name="Chatterjee A.K."/>
            <person name="Delaney T.P."/>
            <person name="Lazarowitz S.G."/>
            <person name="Martin G.B."/>
            <person name="Schneider D.J."/>
            <person name="Tang X."/>
            <person name="Bender C.L."/>
            <person name="White O."/>
            <person name="Fraser C.M."/>
            <person name="Collmer A."/>
        </authorList>
    </citation>
    <scope>NUCLEOTIDE SEQUENCE [LARGE SCALE GENOMIC DNA]</scope>
    <source>
        <strain>ATCC BAA-871 / DC3000</strain>
    </source>
</reference>
<dbReference type="EC" id="3.6.5.3" evidence="2"/>
<dbReference type="EMBL" id="AE016853">
    <property type="protein sequence ID" value="AAO54166.1"/>
    <property type="molecule type" value="Genomic_DNA"/>
</dbReference>
<dbReference type="RefSeq" id="NP_790471.1">
    <property type="nucleotide sequence ID" value="NC_004578.1"/>
</dbReference>
<dbReference type="RefSeq" id="WP_007245455.1">
    <property type="nucleotide sequence ID" value="NC_004578.1"/>
</dbReference>
<dbReference type="SMR" id="Q889X3"/>
<dbReference type="STRING" id="223283.PSPTO_0624"/>
<dbReference type="GeneID" id="1182244"/>
<dbReference type="KEGG" id="pst:PSPTO_0624"/>
<dbReference type="PATRIC" id="fig|223283.9.peg.630"/>
<dbReference type="eggNOG" id="COG0050">
    <property type="taxonomic scope" value="Bacteria"/>
</dbReference>
<dbReference type="HOGENOM" id="CLU_007265_0_0_6"/>
<dbReference type="OrthoDB" id="9803139at2"/>
<dbReference type="PhylomeDB" id="Q889X3"/>
<dbReference type="Proteomes" id="UP000002515">
    <property type="component" value="Chromosome"/>
</dbReference>
<dbReference type="GO" id="GO:0005829">
    <property type="term" value="C:cytosol"/>
    <property type="evidence" value="ECO:0007669"/>
    <property type="project" value="TreeGrafter"/>
</dbReference>
<dbReference type="GO" id="GO:0005525">
    <property type="term" value="F:GTP binding"/>
    <property type="evidence" value="ECO:0007669"/>
    <property type="project" value="UniProtKB-UniRule"/>
</dbReference>
<dbReference type="GO" id="GO:0003924">
    <property type="term" value="F:GTPase activity"/>
    <property type="evidence" value="ECO:0007669"/>
    <property type="project" value="InterPro"/>
</dbReference>
<dbReference type="GO" id="GO:0097216">
    <property type="term" value="F:guanosine tetraphosphate binding"/>
    <property type="evidence" value="ECO:0007669"/>
    <property type="project" value="UniProtKB-ARBA"/>
</dbReference>
<dbReference type="GO" id="GO:0003746">
    <property type="term" value="F:translation elongation factor activity"/>
    <property type="evidence" value="ECO:0007669"/>
    <property type="project" value="UniProtKB-UniRule"/>
</dbReference>
<dbReference type="CDD" id="cd01884">
    <property type="entry name" value="EF_Tu"/>
    <property type="match status" value="1"/>
</dbReference>
<dbReference type="CDD" id="cd03697">
    <property type="entry name" value="EFTU_II"/>
    <property type="match status" value="1"/>
</dbReference>
<dbReference type="CDD" id="cd03707">
    <property type="entry name" value="EFTU_III"/>
    <property type="match status" value="1"/>
</dbReference>
<dbReference type="FunFam" id="2.40.30.10:FF:000001">
    <property type="entry name" value="Elongation factor Tu"/>
    <property type="match status" value="1"/>
</dbReference>
<dbReference type="FunFam" id="3.40.50.300:FF:000003">
    <property type="entry name" value="Elongation factor Tu"/>
    <property type="match status" value="1"/>
</dbReference>
<dbReference type="Gene3D" id="3.40.50.300">
    <property type="entry name" value="P-loop containing nucleotide triphosphate hydrolases"/>
    <property type="match status" value="1"/>
</dbReference>
<dbReference type="Gene3D" id="2.40.30.10">
    <property type="entry name" value="Translation factors"/>
    <property type="match status" value="2"/>
</dbReference>
<dbReference type="HAMAP" id="MF_00118_B">
    <property type="entry name" value="EF_Tu_B"/>
    <property type="match status" value="1"/>
</dbReference>
<dbReference type="InterPro" id="IPR041709">
    <property type="entry name" value="EF-Tu_GTP-bd"/>
</dbReference>
<dbReference type="InterPro" id="IPR050055">
    <property type="entry name" value="EF-Tu_GTPase"/>
</dbReference>
<dbReference type="InterPro" id="IPR004161">
    <property type="entry name" value="EFTu-like_2"/>
</dbReference>
<dbReference type="InterPro" id="IPR033720">
    <property type="entry name" value="EFTU_2"/>
</dbReference>
<dbReference type="InterPro" id="IPR031157">
    <property type="entry name" value="G_TR_CS"/>
</dbReference>
<dbReference type="InterPro" id="IPR027417">
    <property type="entry name" value="P-loop_NTPase"/>
</dbReference>
<dbReference type="InterPro" id="IPR005225">
    <property type="entry name" value="Small_GTP-bd"/>
</dbReference>
<dbReference type="InterPro" id="IPR000795">
    <property type="entry name" value="T_Tr_GTP-bd_dom"/>
</dbReference>
<dbReference type="InterPro" id="IPR009000">
    <property type="entry name" value="Transl_B-barrel_sf"/>
</dbReference>
<dbReference type="InterPro" id="IPR009001">
    <property type="entry name" value="Transl_elong_EF1A/Init_IF2_C"/>
</dbReference>
<dbReference type="InterPro" id="IPR004541">
    <property type="entry name" value="Transl_elong_EFTu/EF1A_bac/org"/>
</dbReference>
<dbReference type="InterPro" id="IPR004160">
    <property type="entry name" value="Transl_elong_EFTu/EF1A_C"/>
</dbReference>
<dbReference type="NCBIfam" id="TIGR00485">
    <property type="entry name" value="EF-Tu"/>
    <property type="match status" value="1"/>
</dbReference>
<dbReference type="NCBIfam" id="NF000766">
    <property type="entry name" value="PRK00049.1"/>
    <property type="match status" value="1"/>
</dbReference>
<dbReference type="NCBIfam" id="NF009372">
    <property type="entry name" value="PRK12735.1"/>
    <property type="match status" value="1"/>
</dbReference>
<dbReference type="NCBIfam" id="NF009373">
    <property type="entry name" value="PRK12736.1"/>
    <property type="match status" value="1"/>
</dbReference>
<dbReference type="NCBIfam" id="TIGR00231">
    <property type="entry name" value="small_GTP"/>
    <property type="match status" value="1"/>
</dbReference>
<dbReference type="PANTHER" id="PTHR43721:SF22">
    <property type="entry name" value="ELONGATION FACTOR TU, MITOCHONDRIAL"/>
    <property type="match status" value="1"/>
</dbReference>
<dbReference type="PANTHER" id="PTHR43721">
    <property type="entry name" value="ELONGATION FACTOR TU-RELATED"/>
    <property type="match status" value="1"/>
</dbReference>
<dbReference type="Pfam" id="PF00009">
    <property type="entry name" value="GTP_EFTU"/>
    <property type="match status" value="1"/>
</dbReference>
<dbReference type="Pfam" id="PF03144">
    <property type="entry name" value="GTP_EFTU_D2"/>
    <property type="match status" value="1"/>
</dbReference>
<dbReference type="Pfam" id="PF03143">
    <property type="entry name" value="GTP_EFTU_D3"/>
    <property type="match status" value="1"/>
</dbReference>
<dbReference type="PRINTS" id="PR00315">
    <property type="entry name" value="ELONGATNFCT"/>
</dbReference>
<dbReference type="SUPFAM" id="SSF50465">
    <property type="entry name" value="EF-Tu/eEF-1alpha/eIF2-gamma C-terminal domain"/>
    <property type="match status" value="1"/>
</dbReference>
<dbReference type="SUPFAM" id="SSF52540">
    <property type="entry name" value="P-loop containing nucleoside triphosphate hydrolases"/>
    <property type="match status" value="1"/>
</dbReference>
<dbReference type="SUPFAM" id="SSF50447">
    <property type="entry name" value="Translation proteins"/>
    <property type="match status" value="1"/>
</dbReference>
<dbReference type="PROSITE" id="PS00301">
    <property type="entry name" value="G_TR_1"/>
    <property type="match status" value="1"/>
</dbReference>
<dbReference type="PROSITE" id="PS51722">
    <property type="entry name" value="G_TR_2"/>
    <property type="match status" value="1"/>
</dbReference>
<accession>Q889X3</accession>
<organism>
    <name type="scientific">Pseudomonas syringae pv. tomato (strain ATCC BAA-871 / DC3000)</name>
    <dbReference type="NCBI Taxonomy" id="223283"/>
    <lineage>
        <taxon>Bacteria</taxon>
        <taxon>Pseudomonadati</taxon>
        <taxon>Pseudomonadota</taxon>
        <taxon>Gammaproteobacteria</taxon>
        <taxon>Pseudomonadales</taxon>
        <taxon>Pseudomonadaceae</taxon>
        <taxon>Pseudomonas</taxon>
    </lineage>
</organism>
<protein>
    <recommendedName>
        <fullName evidence="2">Elongation factor Tu</fullName>
        <shortName evidence="2">EF-Tu</shortName>
        <ecNumber evidence="2">3.6.5.3</ecNumber>
    </recommendedName>
</protein>